<sequence>MATKVKFKYKGEEKEVDISKIKKVWRVGKMISFTYDDNGKTGRGAVSEKDAPKELLEKLK</sequence>
<name>DN7C_ACIHW</name>
<proteinExistence type="evidence at protein level"/>
<comment type="function">
    <text evidence="1">Can constrain negative DNA supercoils. May be involved in maintaining the integrity of the genome at high temperature.</text>
</comment>
<comment type="biophysicochemical properties">
    <phDependence>
        <text evidence="3">Highly stable from pH 0 to pH 12.</text>
    </phDependence>
    <temperatureDependence>
        <text evidence="3">Hyperthermostable.</text>
    </temperatureDependence>
</comment>
<comment type="subunit">
    <text evidence="3">Monomer.</text>
</comment>
<comment type="subcellular location">
    <subcellularLocation>
        <location evidence="3">Cytoplasm</location>
    </subcellularLocation>
</comment>
<comment type="similarity">
    <text evidence="5">Belongs to the 7 kDa DNA-binding/endoribonuclease P2 family.</text>
</comment>
<accession>F4B8X5</accession>
<evidence type="ECO:0000250" key="1">
    <source>
        <dbReference type="UniProtKB" id="P61990"/>
    </source>
</evidence>
<evidence type="ECO:0000256" key="2">
    <source>
        <dbReference type="SAM" id="MobiDB-lite"/>
    </source>
</evidence>
<evidence type="ECO:0000269" key="3">
    <source>
    </source>
</evidence>
<evidence type="ECO:0000303" key="4">
    <source>
    </source>
</evidence>
<evidence type="ECO:0000305" key="5"/>
<evidence type="ECO:0000312" key="6">
    <source>
        <dbReference type="EMBL" id="AEE93845.1"/>
    </source>
</evidence>
<keyword id="KW-0963">Cytoplasm</keyword>
<keyword id="KW-0238">DNA-binding</keyword>
<organism>
    <name type="scientific">Acidianus hospitalis (strain W1)</name>
    <dbReference type="NCBI Taxonomy" id="933801"/>
    <lineage>
        <taxon>Archaea</taxon>
        <taxon>Thermoproteota</taxon>
        <taxon>Thermoprotei</taxon>
        <taxon>Sulfolobales</taxon>
        <taxon>Sulfolobaceae</taxon>
        <taxon>Acidianus</taxon>
    </lineage>
</organism>
<protein>
    <recommendedName>
        <fullName evidence="5">DNA-binding protein 7c</fullName>
    </recommendedName>
    <alternativeName>
        <fullName evidence="5">7 kDa DNA-binding protein c</fullName>
    </alternativeName>
    <alternativeName>
        <fullName evidence="4">Aho7c</fullName>
    </alternativeName>
</protein>
<reference key="1">
    <citation type="journal article" date="2011" name="Extremophiles">
        <title>Genomic analysis of Acidianus hospitalis W1 a host for studying crenarchaeal virus and plasmid life cycles.</title>
        <authorList>
            <person name="You X.Y."/>
            <person name="Liu C."/>
            <person name="Wang S.Y."/>
            <person name="Jiang C.Y."/>
            <person name="Shah S.A."/>
            <person name="Prangishvili D."/>
            <person name="She Q."/>
            <person name="Liu S.J."/>
            <person name="Garrett R.A."/>
        </authorList>
    </citation>
    <scope>NUCLEOTIDE SEQUENCE [LARGE SCALE GENOMIC DNA]</scope>
    <source>
        <strain>W1</strain>
    </source>
</reference>
<reference key="2">
    <citation type="journal article" date="2016" name="Sci. Rep.">
        <title>The archaeal '7 kDa DNA-binding' proteins: extended characterization of an old gifted family.</title>
        <authorList>
            <person name="Kalichuk V."/>
            <person name="Behar G."/>
            <person name="Renodon-Corniere A."/>
            <person name="Danovski G."/>
            <person name="Obal G."/>
            <person name="Barbet J."/>
            <person name="Mouratou B."/>
            <person name="Pecorari F."/>
        </authorList>
    </citation>
    <scope>DNA-BINDING</scope>
    <scope>BIOPHYSICOCHEMICAL PROPERTIES</scope>
    <scope>SUBUNIT</scope>
    <scope>SUBCELLULAR LOCATION</scope>
    <scope>NOMENCLATURE</scope>
</reference>
<gene>
    <name evidence="6" type="ordered locus">Ahos_0959</name>
</gene>
<dbReference type="EMBL" id="CP002535">
    <property type="protein sequence ID" value="AEE93845.1"/>
    <property type="molecule type" value="Genomic_DNA"/>
</dbReference>
<dbReference type="SMR" id="F4B8X5"/>
<dbReference type="STRING" id="933801.Ahos_0959"/>
<dbReference type="KEGG" id="aho:Ahos_0959"/>
<dbReference type="eggNOG" id="arCOG05888">
    <property type="taxonomic scope" value="Archaea"/>
</dbReference>
<dbReference type="HOGENOM" id="CLU_2929990_0_0_2"/>
<dbReference type="OrthoDB" id="33867at2157"/>
<dbReference type="Proteomes" id="UP000008458">
    <property type="component" value="Chromosome"/>
</dbReference>
<dbReference type="GO" id="GO:0005737">
    <property type="term" value="C:cytoplasm"/>
    <property type="evidence" value="ECO:0007669"/>
    <property type="project" value="UniProtKB-SubCell"/>
</dbReference>
<dbReference type="GO" id="GO:0003677">
    <property type="term" value="F:DNA binding"/>
    <property type="evidence" value="ECO:0007669"/>
    <property type="project" value="UniProtKB-KW"/>
</dbReference>
<dbReference type="GO" id="GO:0004521">
    <property type="term" value="F:RNA endonuclease activity"/>
    <property type="evidence" value="ECO:0007669"/>
    <property type="project" value="InterPro"/>
</dbReference>
<dbReference type="Gene3D" id="2.40.50.40">
    <property type="match status" value="1"/>
</dbReference>
<dbReference type="InterPro" id="IPR016197">
    <property type="entry name" value="Chromo-like_dom_sf"/>
</dbReference>
<dbReference type="InterPro" id="IPR003212">
    <property type="entry name" value="DNA-bd_7a-e_arc"/>
</dbReference>
<dbReference type="NCBIfam" id="NF045555">
    <property type="entry name" value="Sul7d"/>
    <property type="match status" value="1"/>
</dbReference>
<dbReference type="Pfam" id="PF02294">
    <property type="entry name" value="7kD_DNA_binding"/>
    <property type="match status" value="1"/>
</dbReference>
<dbReference type="SUPFAM" id="SSF54160">
    <property type="entry name" value="Chromo domain-like"/>
    <property type="match status" value="1"/>
</dbReference>
<feature type="chain" id="PRO_0000439047" description="DNA-binding protein 7c">
    <location>
        <begin position="1"/>
        <end position="60"/>
    </location>
</feature>
<feature type="region of interest" description="Disordered" evidence="2">
    <location>
        <begin position="37"/>
        <end position="60"/>
    </location>
</feature>
<feature type="compositionally biased region" description="Basic and acidic residues" evidence="2">
    <location>
        <begin position="46"/>
        <end position="60"/>
    </location>
</feature>